<sequence>MEPPGDWGPPPWRSTPKTDVLRLVLYLTFLGAPCYAPALPSCKEDEYPVGSECCPKCSPGYRVKEACGELTGTVCEPCPPGTYIAHLNGLSKCLQCQMCDPAMGLRASRNCSRTENAVCGCSPGHFCIVQDGDHCAACRAYATSSPGQRVQKGGTESQDTLCQNCPPGTFSPNGTLEECQHQTKCSWLVTKAGAGTSSSHWVWWFLSGSLVIVIVCSTVGLIICVKRRKPRGDVVKVIVSVQRKRQEAEGEATVIEALQAPPDVTTVAVEETIPSFTGRSPNH</sequence>
<organism>
    <name type="scientific">Homo sapiens</name>
    <name type="common">Human</name>
    <dbReference type="NCBI Taxonomy" id="9606"/>
    <lineage>
        <taxon>Eukaryota</taxon>
        <taxon>Metazoa</taxon>
        <taxon>Chordata</taxon>
        <taxon>Craniata</taxon>
        <taxon>Vertebrata</taxon>
        <taxon>Euteleostomi</taxon>
        <taxon>Mammalia</taxon>
        <taxon>Eutheria</taxon>
        <taxon>Euarchontoglires</taxon>
        <taxon>Primates</taxon>
        <taxon>Haplorrhini</taxon>
        <taxon>Catarrhini</taxon>
        <taxon>Hominidae</taxon>
        <taxon>Homo</taxon>
    </lineage>
</organism>
<dbReference type="EMBL" id="U70321">
    <property type="protein sequence ID" value="AAB58354.1"/>
    <property type="molecule type" value="mRNA"/>
</dbReference>
<dbReference type="EMBL" id="U81232">
    <property type="protein sequence ID" value="AAD00505.1"/>
    <property type="molecule type" value="mRNA"/>
</dbReference>
<dbReference type="EMBL" id="AF153978">
    <property type="protein sequence ID" value="AAF75588.1"/>
    <property type="molecule type" value="mRNA"/>
</dbReference>
<dbReference type="EMBL" id="AF373877">
    <property type="protein sequence ID" value="AAL47717.1"/>
    <property type="molecule type" value="mRNA"/>
</dbReference>
<dbReference type="EMBL" id="AF373878">
    <property type="protein sequence ID" value="AAL47718.1"/>
    <property type="molecule type" value="mRNA"/>
</dbReference>
<dbReference type="EMBL" id="AY358879">
    <property type="protein sequence ID" value="AAQ89238.1"/>
    <property type="molecule type" value="mRNA"/>
</dbReference>
<dbReference type="EMBL" id="AK124010">
    <property type="protein sequence ID" value="BAG53992.1"/>
    <property type="molecule type" value="mRNA"/>
</dbReference>
<dbReference type="EMBL" id="CR456909">
    <property type="protein sequence ID" value="CAG33190.1"/>
    <property type="molecule type" value="mRNA"/>
</dbReference>
<dbReference type="EMBL" id="AY466111">
    <property type="protein sequence ID" value="AAR23264.1"/>
    <property type="molecule type" value="Genomic_DNA"/>
</dbReference>
<dbReference type="EMBL" id="AL139246">
    <property type="status" value="NOT_ANNOTATED_CDS"/>
    <property type="molecule type" value="Genomic_DNA"/>
</dbReference>
<dbReference type="EMBL" id="CH471183">
    <property type="protein sequence ID" value="EAW56089.1"/>
    <property type="molecule type" value="Genomic_DNA"/>
</dbReference>
<dbReference type="EMBL" id="CH471183">
    <property type="protein sequence ID" value="EAW56090.1"/>
    <property type="molecule type" value="Genomic_DNA"/>
</dbReference>
<dbReference type="EMBL" id="BC002794">
    <property type="protein sequence ID" value="AAH02794.1"/>
    <property type="molecule type" value="mRNA"/>
</dbReference>
<dbReference type="EMBL" id="BC029848">
    <property type="protein sequence ID" value="AAH29848.1"/>
    <property type="molecule type" value="mRNA"/>
</dbReference>
<dbReference type="CCDS" id="CCDS44046.1">
    <molecule id="Q92956-1"/>
</dbReference>
<dbReference type="RefSeq" id="NP_003811.2">
    <molecule id="Q92956-1"/>
    <property type="nucleotide sequence ID" value="NM_003820.3"/>
</dbReference>
<dbReference type="RefSeq" id="XP_016858209.1">
    <property type="nucleotide sequence ID" value="XM_017002720.1"/>
</dbReference>
<dbReference type="RefSeq" id="XP_047289368.1">
    <molecule id="Q92956-1"/>
    <property type="nucleotide sequence ID" value="XM_047433412.1"/>
</dbReference>
<dbReference type="RefSeq" id="XP_047289369.1">
    <molecule id="Q92956-1"/>
    <property type="nucleotide sequence ID" value="XM_047433413.1"/>
</dbReference>
<dbReference type="RefSeq" id="XP_047289370.1">
    <molecule id="Q92956-1"/>
    <property type="nucleotide sequence ID" value="XM_047433414.1"/>
</dbReference>
<dbReference type="RefSeq" id="XP_047289372.1">
    <molecule id="Q92956-1"/>
    <property type="nucleotide sequence ID" value="XM_047433416.1"/>
</dbReference>
<dbReference type="RefSeq" id="XP_047289374.1">
    <molecule id="Q92956-1"/>
    <property type="nucleotide sequence ID" value="XM_047433418.1"/>
</dbReference>
<dbReference type="RefSeq" id="XP_047289375.1">
    <molecule id="Q92956-1"/>
    <property type="nucleotide sequence ID" value="XM_047433419.1"/>
</dbReference>
<dbReference type="RefSeq" id="XP_054184585.1">
    <molecule id="Q92956-1"/>
    <property type="nucleotide sequence ID" value="XM_054328610.1"/>
</dbReference>
<dbReference type="RefSeq" id="XP_054184586.1">
    <molecule id="Q92956-1"/>
    <property type="nucleotide sequence ID" value="XM_054328611.1"/>
</dbReference>
<dbReference type="RefSeq" id="XP_054184587.1">
    <molecule id="Q92956-1"/>
    <property type="nucleotide sequence ID" value="XM_054328612.1"/>
</dbReference>
<dbReference type="RefSeq" id="XP_054184588.1">
    <molecule id="Q92956-1"/>
    <property type="nucleotide sequence ID" value="XM_054328613.1"/>
</dbReference>
<dbReference type="RefSeq" id="XP_054184589.1">
    <molecule id="Q92956-1"/>
    <property type="nucleotide sequence ID" value="XM_054328614.1"/>
</dbReference>
<dbReference type="RefSeq" id="XP_054195384.1">
    <molecule id="Q92956-1"/>
    <property type="nucleotide sequence ID" value="XM_054339409.1"/>
</dbReference>
<dbReference type="RefSeq" id="XP_054195385.1">
    <molecule id="Q92956-1"/>
    <property type="nucleotide sequence ID" value="XM_054339410.1"/>
</dbReference>
<dbReference type="RefSeq" id="XP_054195386.1">
    <molecule id="Q92956-1"/>
    <property type="nucleotide sequence ID" value="XM_054339411.1"/>
</dbReference>
<dbReference type="RefSeq" id="XP_054195387.1">
    <molecule id="Q92956-1"/>
    <property type="nucleotide sequence ID" value="XM_054339412.1"/>
</dbReference>
<dbReference type="RefSeq" id="XP_054195388.1">
    <molecule id="Q92956-1"/>
    <property type="nucleotide sequence ID" value="XM_054339413.1"/>
</dbReference>
<dbReference type="PDB" id="1JMA">
    <property type="method" value="X-ray"/>
    <property type="resolution" value="2.65 A"/>
    <property type="chains" value="B=39-199"/>
</dbReference>
<dbReference type="PDB" id="2AW2">
    <property type="method" value="X-ray"/>
    <property type="resolution" value="2.80 A"/>
    <property type="chains" value="B/Y=39-142"/>
</dbReference>
<dbReference type="PDB" id="4FHQ">
    <property type="method" value="X-ray"/>
    <property type="resolution" value="2.25 A"/>
    <property type="chains" value="A=39-162"/>
</dbReference>
<dbReference type="PDB" id="4RSU">
    <property type="method" value="X-ray"/>
    <property type="resolution" value="2.30 A"/>
    <property type="chains" value="D/E/F/J/K/L=39-162"/>
</dbReference>
<dbReference type="PDB" id="5T2Q">
    <property type="method" value="X-ray"/>
    <property type="resolution" value="1.90 A"/>
    <property type="chains" value="A/B=39-142"/>
</dbReference>
<dbReference type="PDB" id="5T2R">
    <property type="method" value="X-ray"/>
    <property type="resolution" value="2.10 A"/>
    <property type="chains" value="A/B=39-142"/>
</dbReference>
<dbReference type="PDB" id="6NG3">
    <property type="method" value="X-ray"/>
    <property type="resolution" value="2.88 A"/>
    <property type="chains" value="A=39-143"/>
</dbReference>
<dbReference type="PDB" id="7MSG">
    <property type="method" value="X-ray"/>
    <property type="resolution" value="3.50 A"/>
    <property type="chains" value="D/E/F=39-143"/>
</dbReference>
<dbReference type="PDBsum" id="1JMA"/>
<dbReference type="PDBsum" id="2AW2"/>
<dbReference type="PDBsum" id="4FHQ"/>
<dbReference type="PDBsum" id="4RSU"/>
<dbReference type="PDBsum" id="5T2Q"/>
<dbReference type="PDBsum" id="5T2R"/>
<dbReference type="PDBsum" id="6NG3"/>
<dbReference type="PDBsum" id="7MSG"/>
<dbReference type="SMR" id="Q92956"/>
<dbReference type="BioGRID" id="114298">
    <property type="interactions" value="32"/>
</dbReference>
<dbReference type="ComplexPortal" id="CPX-9222">
    <property type="entry name" value="Lymphotoxin-alpha-TNFRSF14 receptor complex"/>
</dbReference>
<dbReference type="ComplexPortal" id="CPX-9223">
    <property type="entry name" value="TNFSF14-TNFRSF14 receptor complex"/>
</dbReference>
<dbReference type="ComplexPortal" id="CPX-9322">
    <property type="entry name" value="B-T lymphocyte attenuator, BTLA-TNFRSF14 complex"/>
</dbReference>
<dbReference type="DIP" id="DIP-34779N"/>
<dbReference type="ELM" id="Q92956"/>
<dbReference type="FunCoup" id="Q92956">
    <property type="interactions" value="665"/>
</dbReference>
<dbReference type="IntAct" id="Q92956">
    <property type="interactions" value="31"/>
</dbReference>
<dbReference type="MINT" id="Q92956"/>
<dbReference type="STRING" id="9606.ENSP00000347948"/>
<dbReference type="GlyCosmos" id="Q92956">
    <property type="glycosylation" value="2 sites, No reported glycans"/>
</dbReference>
<dbReference type="GlyGen" id="Q92956">
    <property type="glycosylation" value="3 sites, 1 O-linked glycan (1 site)"/>
</dbReference>
<dbReference type="iPTMnet" id="Q92956"/>
<dbReference type="PhosphoSitePlus" id="Q92956"/>
<dbReference type="BioMuta" id="TNFRSF14"/>
<dbReference type="DMDM" id="13878821"/>
<dbReference type="CPTAC" id="CPTAC-5985"/>
<dbReference type="jPOST" id="Q92956"/>
<dbReference type="MassIVE" id="Q92956"/>
<dbReference type="PaxDb" id="9606-ENSP00000347948"/>
<dbReference type="PeptideAtlas" id="Q92956"/>
<dbReference type="ProteomicsDB" id="75630">
    <molecule id="Q92956-1"/>
</dbReference>
<dbReference type="Antibodypedia" id="1626">
    <property type="antibodies" value="807 antibodies from 44 providers"/>
</dbReference>
<dbReference type="CPTC" id="Q92956">
    <property type="antibodies" value="3 antibodies"/>
</dbReference>
<dbReference type="DNASU" id="8764"/>
<dbReference type="Ensembl" id="ENST00000355716.5">
    <molecule id="Q92956-1"/>
    <property type="protein sequence ID" value="ENSP00000347948.4"/>
    <property type="gene ID" value="ENSG00000157873.18"/>
</dbReference>
<dbReference type="Ensembl" id="ENST00000621877.3">
    <molecule id="Q92956-1"/>
    <property type="protein sequence ID" value="ENSP00000478308.1"/>
    <property type="gene ID" value="ENSG00000273936.4"/>
</dbReference>
<dbReference type="GeneID" id="8764"/>
<dbReference type="KEGG" id="hsa:8764"/>
<dbReference type="MANE-Select" id="ENST00000355716.5">
    <property type="protein sequence ID" value="ENSP00000347948.4"/>
    <property type="RefSeq nucleotide sequence ID" value="NM_003820.4"/>
    <property type="RefSeq protein sequence ID" value="NP_003811.2"/>
</dbReference>
<dbReference type="UCSC" id="uc001ajr.4">
    <molecule id="Q92956-1"/>
    <property type="organism name" value="human"/>
</dbReference>
<dbReference type="AGR" id="HGNC:11912"/>
<dbReference type="CTD" id="8764"/>
<dbReference type="DisGeNET" id="8764"/>
<dbReference type="GeneCards" id="TNFRSF14"/>
<dbReference type="HGNC" id="HGNC:11912">
    <property type="gene designation" value="TNFRSF14"/>
</dbReference>
<dbReference type="HPA" id="ENSG00000157873">
    <property type="expression patterns" value="Low tissue specificity"/>
</dbReference>
<dbReference type="MalaCards" id="TNFRSF14"/>
<dbReference type="MIM" id="602746">
    <property type="type" value="gene"/>
</dbReference>
<dbReference type="neXtProt" id="NX_Q92956"/>
<dbReference type="OpenTargets" id="ENSG00000157873"/>
<dbReference type="PharmGKB" id="PA36605"/>
<dbReference type="VEuPathDB" id="HostDB:ENSG00000157873"/>
<dbReference type="eggNOG" id="ENOG502S1XZ">
    <property type="taxonomic scope" value="Eukaryota"/>
</dbReference>
<dbReference type="GeneTree" id="ENSGT00940000162427"/>
<dbReference type="InParanoid" id="Q92956"/>
<dbReference type="OMA" id="LPWTRCS"/>
<dbReference type="OrthoDB" id="10031141at2759"/>
<dbReference type="PAN-GO" id="Q92956">
    <property type="GO annotations" value="7 GO annotations based on evolutionary models"/>
</dbReference>
<dbReference type="PhylomeDB" id="Q92956"/>
<dbReference type="TreeFam" id="TF331157"/>
<dbReference type="PathwayCommons" id="Q92956"/>
<dbReference type="Reactome" id="R-HSA-5669034">
    <property type="pathway name" value="TNFs bind their physiological receptors"/>
</dbReference>
<dbReference type="Reactome" id="R-HSA-9927353">
    <property type="pathway name" value="Co-inhibition by BTLA"/>
</dbReference>
<dbReference type="SignaLink" id="Q92956"/>
<dbReference type="SIGNOR" id="Q92956"/>
<dbReference type="BioGRID-ORCS" id="8764">
    <property type="hits" value="12 hits in 1154 CRISPR screens"/>
</dbReference>
<dbReference type="ChiTaRS" id="TNFRSF14">
    <property type="organism name" value="human"/>
</dbReference>
<dbReference type="EvolutionaryTrace" id="Q92956"/>
<dbReference type="GeneWiki" id="TNFRSF14"/>
<dbReference type="GenomeRNAi" id="8764"/>
<dbReference type="Pharos" id="Q92956">
    <property type="development level" value="Tbio"/>
</dbReference>
<dbReference type="PRO" id="PR:Q92956"/>
<dbReference type="Proteomes" id="UP000005640">
    <property type="component" value="Chromosome 1"/>
</dbReference>
<dbReference type="RNAct" id="Q92956">
    <property type="molecule type" value="protein"/>
</dbReference>
<dbReference type="Bgee" id="ENSG00000157873">
    <property type="expression patterns" value="Expressed in granulocyte and 97 other cell types or tissues"/>
</dbReference>
<dbReference type="ExpressionAtlas" id="Q92956">
    <property type="expression patterns" value="baseline and differential"/>
</dbReference>
<dbReference type="GO" id="GO:0009897">
    <property type="term" value="C:external side of plasma membrane"/>
    <property type="evidence" value="ECO:0000318"/>
    <property type="project" value="GO_Central"/>
</dbReference>
<dbReference type="GO" id="GO:0005886">
    <property type="term" value="C:plasma membrane"/>
    <property type="evidence" value="ECO:0000314"/>
    <property type="project" value="UniProtKB"/>
</dbReference>
<dbReference type="GO" id="GO:0019955">
    <property type="term" value="F:cytokine binding"/>
    <property type="evidence" value="ECO:0000353"/>
    <property type="project" value="UniProtKB"/>
</dbReference>
<dbReference type="GO" id="GO:0048018">
    <property type="term" value="F:receptor ligand activity"/>
    <property type="evidence" value="ECO:0000314"/>
    <property type="project" value="UniProt"/>
</dbReference>
<dbReference type="GO" id="GO:0005031">
    <property type="term" value="F:tumor necrosis factor receptor activity"/>
    <property type="evidence" value="ECO:0000304"/>
    <property type="project" value="ProtInc"/>
</dbReference>
<dbReference type="GO" id="GO:0031625">
    <property type="term" value="F:ubiquitin protein ligase binding"/>
    <property type="evidence" value="ECO:0000353"/>
    <property type="project" value="UniProtKB"/>
</dbReference>
<dbReference type="GO" id="GO:0001618">
    <property type="term" value="F:virus receptor activity"/>
    <property type="evidence" value="ECO:0007669"/>
    <property type="project" value="UniProtKB-KW"/>
</dbReference>
<dbReference type="GO" id="GO:0002250">
    <property type="term" value="P:adaptive immune response"/>
    <property type="evidence" value="ECO:0007669"/>
    <property type="project" value="UniProtKB-KW"/>
</dbReference>
<dbReference type="GO" id="GO:0007166">
    <property type="term" value="P:cell surface receptor signaling pathway"/>
    <property type="evidence" value="ECO:0000304"/>
    <property type="project" value="ProtInc"/>
</dbReference>
<dbReference type="GO" id="GO:0050829">
    <property type="term" value="P:defense response to Gram-negative bacterium"/>
    <property type="evidence" value="ECO:0000318"/>
    <property type="project" value="GO_Central"/>
</dbReference>
<dbReference type="GO" id="GO:0050830">
    <property type="term" value="P:defense response to Gram-positive bacterium"/>
    <property type="evidence" value="ECO:0000318"/>
    <property type="project" value="GO_Central"/>
</dbReference>
<dbReference type="GO" id="GO:0006955">
    <property type="term" value="P:immune response"/>
    <property type="evidence" value="ECO:0000304"/>
    <property type="project" value="ProtInc"/>
</dbReference>
<dbReference type="GO" id="GO:0045087">
    <property type="term" value="P:innate immune response"/>
    <property type="evidence" value="ECO:0007669"/>
    <property type="project" value="UniProtKB-KW"/>
</dbReference>
<dbReference type="GO" id="GO:1905675">
    <property type="term" value="P:negative regulation of adaptive immune memory response"/>
    <property type="evidence" value="ECO:0000314"/>
    <property type="project" value="UniProtKB"/>
</dbReference>
<dbReference type="GO" id="GO:0046642">
    <property type="term" value="P:negative regulation of alpha-beta T cell proliferation"/>
    <property type="evidence" value="ECO:0000318"/>
    <property type="project" value="GO_Central"/>
</dbReference>
<dbReference type="GO" id="GO:0042130">
    <property type="term" value="P:negative regulation of T cell proliferation"/>
    <property type="evidence" value="ECO:0000314"/>
    <property type="project" value="UniProt"/>
</dbReference>
<dbReference type="GO" id="GO:0002720">
    <property type="term" value="P:positive regulation of cytokine production involved in immune response"/>
    <property type="evidence" value="ECO:0000318"/>
    <property type="project" value="GO_Central"/>
</dbReference>
<dbReference type="GO" id="GO:2000406">
    <property type="term" value="P:positive regulation of T cell migration"/>
    <property type="evidence" value="ECO:0000318"/>
    <property type="project" value="GO_Central"/>
</dbReference>
<dbReference type="GO" id="GO:0031295">
    <property type="term" value="P:T cell costimulation"/>
    <property type="evidence" value="ECO:0000314"/>
    <property type="project" value="UniProtKB"/>
</dbReference>
<dbReference type="CDD" id="cd10582">
    <property type="entry name" value="TNFRSF14"/>
    <property type="match status" value="1"/>
</dbReference>
<dbReference type="FunFam" id="2.10.50.10:FF:000007">
    <property type="entry name" value="TNF receptor superfamily member 14"/>
    <property type="match status" value="1"/>
</dbReference>
<dbReference type="FunFam" id="2.10.50.10:FF:000009">
    <property type="entry name" value="Tumor necrosis factor receptor superfamily member 14"/>
    <property type="match status" value="1"/>
</dbReference>
<dbReference type="FunFam" id="2.10.50.10:FF:000040">
    <property type="entry name" value="Tumor necrosis factor receptor superfamily member 14"/>
    <property type="match status" value="1"/>
</dbReference>
<dbReference type="Gene3D" id="2.10.50.10">
    <property type="entry name" value="Tumor Necrosis Factor Receptor, subunit A, domain 2"/>
    <property type="match status" value="3"/>
</dbReference>
<dbReference type="InterPro" id="IPR001368">
    <property type="entry name" value="TNFR/NGFR_Cys_rich_reg"/>
</dbReference>
<dbReference type="InterPro" id="IPR022332">
    <property type="entry name" value="TNFR_14"/>
</dbReference>
<dbReference type="InterPro" id="IPR034031">
    <property type="entry name" value="TNFRSF14/UL144_N"/>
</dbReference>
<dbReference type="PANTHER" id="PTHR46838">
    <property type="entry name" value="TUMOR NECROSIS FACTOR RECEPTOR SUPERFAMILY MEMBER 14"/>
    <property type="match status" value="1"/>
</dbReference>
<dbReference type="PANTHER" id="PTHR46838:SF1">
    <property type="entry name" value="TUMOR NECROSIS FACTOR RECEPTOR SUPERFAMILY MEMBER 14"/>
    <property type="match status" value="1"/>
</dbReference>
<dbReference type="Pfam" id="PF00020">
    <property type="entry name" value="TNFR_c6"/>
    <property type="match status" value="1"/>
</dbReference>
<dbReference type="PRINTS" id="PR01965">
    <property type="entry name" value="TNFACTORR14"/>
</dbReference>
<dbReference type="SMART" id="SM00208">
    <property type="entry name" value="TNFR"/>
    <property type="match status" value="3"/>
</dbReference>
<dbReference type="SUPFAM" id="SSF57586">
    <property type="entry name" value="TNF receptor-like"/>
    <property type="match status" value="2"/>
</dbReference>
<dbReference type="PROSITE" id="PS00652">
    <property type="entry name" value="TNFR_NGFR_1"/>
    <property type="match status" value="1"/>
</dbReference>
<dbReference type="PROSITE" id="PS50050">
    <property type="entry name" value="TNFR_NGFR_2"/>
    <property type="match status" value="2"/>
</dbReference>
<feature type="signal peptide" evidence="7">
    <location>
        <begin position="1"/>
        <end position="38"/>
    </location>
</feature>
<feature type="chain" id="PRO_0000034590" description="Tumor necrosis factor receptor superfamily member 14">
    <location>
        <begin position="39"/>
        <end position="283"/>
    </location>
</feature>
<feature type="topological domain" description="Extracellular" evidence="2">
    <location>
        <begin position="39"/>
        <end position="202"/>
    </location>
</feature>
<feature type="transmembrane region" description="Helical" evidence="2">
    <location>
        <begin position="203"/>
        <end position="223"/>
    </location>
</feature>
<feature type="topological domain" description="Cytoplasmic" evidence="2">
    <location>
        <begin position="224"/>
        <end position="283"/>
    </location>
</feature>
<feature type="repeat" description="TNFR-Cys 1">
    <location>
        <begin position="42"/>
        <end position="75"/>
    </location>
</feature>
<feature type="repeat" description="TNFR-Cys 2">
    <location>
        <begin position="78"/>
        <end position="119"/>
    </location>
</feature>
<feature type="repeat" description="TNFR-Cys 3">
    <location>
        <begin position="121"/>
        <end position="162"/>
    </location>
</feature>
<feature type="modified residue" description="Phosphoserine" evidence="26">
    <location>
        <position position="240"/>
    </location>
</feature>
<feature type="glycosylation site" description="N-linked (GlcNAc...) asparagine" evidence="8">
    <location>
        <position position="110"/>
    </location>
</feature>
<feature type="glycosylation site" description="N-linked (GlcNAc...) asparagine" evidence="2">
    <location>
        <position position="173"/>
    </location>
</feature>
<feature type="disulfide bond" evidence="8">
    <location>
        <begin position="42"/>
        <end position="53"/>
    </location>
</feature>
<feature type="disulfide bond" evidence="8">
    <location>
        <begin position="54"/>
        <end position="67"/>
    </location>
</feature>
<feature type="disulfide bond" evidence="8">
    <location>
        <begin position="57"/>
        <end position="75"/>
    </location>
</feature>
<feature type="disulfide bond" evidence="8">
    <location>
        <begin position="78"/>
        <end position="93"/>
    </location>
</feature>
<feature type="disulfide bond" evidence="8">
    <location>
        <begin position="96"/>
        <end position="111"/>
    </location>
</feature>
<feature type="disulfide bond" evidence="8">
    <location>
        <begin position="99"/>
        <end position="119"/>
    </location>
</feature>
<feature type="disulfide bond" evidence="8">
    <location>
        <begin position="121"/>
        <end position="138"/>
    </location>
</feature>
<feature type="disulfide bond" evidence="8">
    <location>
        <begin position="127"/>
        <end position="135"/>
    </location>
</feature>
<feature type="splice variant" id="VSP_054186" description="In isoform 2." evidence="19 20">
    <original>MEPPGDWGPPPWRSTPKTDVLRLVLYLTFLGAPCYAPALPSCKEDEYPVGSECCPKCSPGYRVKEACGELTGTVCEPCPPGTYIAHLNGLSKCLQCQMCD</original>
    <variation>MVSRPPRTPLSPSSWT</variation>
    <location>
        <begin position="1"/>
        <end position="100"/>
    </location>
</feature>
<feature type="sequence variant" id="VAR_013007" description="In dbSNP:rs4870." evidence="5 6 17">
    <original>K</original>
    <variation>R</variation>
    <location>
        <position position="17"/>
    </location>
</feature>
<feature type="sequence variant" id="VAR_018955" description="In dbSNP:rs2234163." evidence="17">
    <original>A</original>
    <variation>T</variation>
    <location>
        <position position="117"/>
    </location>
</feature>
<feature type="sequence variant" id="VAR_018956" description="In dbSNP:rs11573986." evidence="17">
    <original>G</original>
    <variation>E</variation>
    <location>
        <position position="174"/>
    </location>
</feature>
<feature type="sequence variant" id="VAR_013440" description="In dbSNP:rs2234167." evidence="5 17">
    <original>V</original>
    <variation>I</variation>
    <location>
        <position position="241"/>
    </location>
</feature>
<feature type="mutagenesis site" description="Abolishes cis interactions with BTLA." evidence="10">
    <original>Y</original>
    <variation>A</variation>
    <location>
        <position position="61"/>
    </location>
</feature>
<feature type="mutagenesis site" description="Does not affect cis interactions with BTLA." evidence="10">
    <original>Y</original>
    <variation>F</variation>
    <location>
        <position position="61"/>
    </location>
</feature>
<feature type="sequence conflict" description="In Ref. 10; AAH29848." evidence="24" ref="10">
    <original>C</original>
    <variation>R</variation>
    <location>
        <position position="135"/>
    </location>
</feature>
<feature type="strand" evidence="29">
    <location>
        <begin position="46"/>
        <end position="49"/>
    </location>
</feature>
<feature type="strand" evidence="29">
    <location>
        <begin position="52"/>
        <end position="55"/>
    </location>
</feature>
<feature type="strand" evidence="29">
    <location>
        <begin position="61"/>
        <end position="65"/>
    </location>
</feature>
<feature type="strand" evidence="28">
    <location>
        <begin position="69"/>
        <end position="71"/>
    </location>
</feature>
<feature type="strand" evidence="29">
    <location>
        <begin position="74"/>
        <end position="77"/>
    </location>
</feature>
<feature type="strand" evidence="28">
    <location>
        <begin position="86"/>
        <end position="88"/>
    </location>
</feature>
<feature type="helix" evidence="29">
    <location>
        <begin position="101"/>
        <end position="103"/>
    </location>
</feature>
<feature type="strand" evidence="29">
    <location>
        <begin position="105"/>
        <end position="109"/>
    </location>
</feature>
<feature type="strand" evidence="27">
    <location>
        <begin position="113"/>
        <end position="115"/>
    </location>
</feature>
<feature type="strand" evidence="29">
    <location>
        <begin position="118"/>
        <end position="121"/>
    </location>
</feature>
<feature type="strand" evidence="29">
    <location>
        <begin position="126"/>
        <end position="131"/>
    </location>
</feature>
<feature type="strand" evidence="29">
    <location>
        <begin position="134"/>
        <end position="139"/>
    </location>
</feature>
<gene>
    <name evidence="25" type="primary">TNFRSF14</name>
    <name type="synonym">HVEA</name>
    <name evidence="21" type="synonym">HVEM</name>
    <name type="ORF">UNQ329/PRO509</name>
</gene>
<comment type="function">
    <text evidence="1 3 9 10 11 13 14 15">Receptor for four distinct ligands: The TNF superfamily members TNFSF14/LIGHT and homotrimeric LTA/lymphotoxin-alpha and the immunoglobulin superfamily members BTLA and CD160, altogether defining a complex stimulatory and inhibitory signaling network (PubMed:10754304, PubMed:18193050, PubMed:23761635, PubMed:9462508). Signals via the TRAF2-TRAF3 E3 ligase pathway to promote immune cell survival and differentiation (PubMed:19915044, PubMed:9153189, PubMed:9162022). Participates in bidirectional cell-cell contact signaling between antigen presenting cells and lymphocytes. In response to ligation of TNFSF14/LIGHT, delivers costimulatory signals to T cells, promoting cell proliferation and effector functions (PubMed:10754304). Interacts with CD160 on NK cells, enhancing IFNG production and anti-tumor immune response (PubMed:23761635). In the context of bacterial infection, acts as a signaling receptor on epithelial cells for CD160 from intraepithelial lymphocytes, triggering the production of antimicrobial proteins and pro-inflammatory cytokines (By similarity). Upon binding to CD160 on activated CD4+ T cells, down-regulates CD28 costimulatory signaling, restricting memory and alloantigen-specific immune response (PubMed:18193050). May interact in cis (on the same cell) or in trans (on other cells) with BTLA (By similarity) (PubMed:19915044). In cis interactions, appears to play an immune regulatory role inhibiting in trans interactions in naive T cells to maintain a resting state. In trans interactions, can predominate during adaptive immune response to provide survival signals to effector T cells (By similarity) (PubMed:19915044).</text>
</comment>
<comment type="function">
    <text evidence="4 12 16">(Microbial infection) Acts as a receptor for Herpes simplex virus 1/HHV-1.</text>
</comment>
<comment type="function">
    <text evidence="4 16">(Microbial infection) Acts as a receptor for Herpes simplex virus 2/HHV-2.</text>
</comment>
<comment type="subunit">
    <text evidence="8 9 10 11 13 14 15">Interacts with TRAF2, TRAF3 and TRAF5 (PubMed:9153189, PubMed:9162022). Interacts (via CRD1/TNFR-Cys 1) with CD160; this interaction is direct (PubMed:18193050, PubMed:23761635). Interacts with LTA and TNFSF14 (PubMed:9462508). Interacts (via CRD1/TNFR-Cys 1) in cis and trans with BTLA; the cis interactions inhibits the trans interactions (PubMed:16169851, PubMed:19915044).</text>
</comment>
<comment type="subunit">
    <text evidence="4 16">(Microbial infection) Interacts with herpes simplex virus 1/HHV-1 envelope glycoprotein D.</text>
</comment>
<comment type="subunit">
    <text evidence="4 16">(Microbial infection) Interacts with herpes simplex virus 2/HHV-2 envelope glycoprotein D.</text>
</comment>
<comment type="interaction">
    <interactant intactId="EBI-1056653">
        <id>Q92956</id>
    </interactant>
    <interactant intactId="EBI-6425864">
        <id>Q3SYB3</id>
        <label>FOXD4L6</label>
    </interactant>
    <organismsDiffer>false</organismsDiffer>
    <experiments>3</experiments>
</comment>
<comment type="interaction">
    <interactant intactId="EBI-1056653">
        <id>Q92956</id>
    </interactant>
    <interactant intactId="EBI-524131">
        <id>O43557</id>
        <label>TNFSF14</label>
    </interactant>
    <organismsDiffer>false</organismsDiffer>
    <experiments>5</experiments>
</comment>
<comment type="interaction">
    <interactant intactId="EBI-1056653">
        <id>Q92956</id>
    </interactant>
    <interactant intactId="EBI-355744">
        <id>Q12933</id>
        <label>TRAF2</label>
    </interactant>
    <organismsDiffer>false</organismsDiffer>
    <experiments>2</experiments>
</comment>
<comment type="interaction">
    <interactant intactId="EBI-1056653">
        <id>Q92956</id>
    </interactant>
    <interactant intactId="EBI-355760">
        <id>Q12933-2</id>
        <label>TRAF2</label>
    </interactant>
    <organismsDiffer>false</organismsDiffer>
    <experiments>4</experiments>
</comment>
<comment type="interaction">
    <interactant intactId="EBI-1056653">
        <id>Q92956</id>
    </interactant>
    <interactant intactId="EBI-523498">
        <id>O00463</id>
        <label>TRAF5</label>
    </interactant>
    <organismsDiffer>false</organismsDiffer>
    <experiments>5</experiments>
</comment>
<comment type="interaction">
    <interactant intactId="EBI-25985089">
        <id>Q92956-2</id>
    </interactant>
    <interactant intactId="EBI-372899">
        <id>Q13148</id>
        <label>TARDBP</label>
    </interactant>
    <organismsDiffer>false</organismsDiffer>
    <experiments>6</experiments>
</comment>
<comment type="subcellular location">
    <subcellularLocation>
        <location evidence="10">Cell membrane</location>
        <topology evidence="24">Single-pass type I membrane protein</topology>
    </subcellularLocation>
</comment>
<comment type="alternative products">
    <event type="alternative splicing"/>
    <isoform>
        <id>Q92956-1</id>
        <name>1</name>
        <sequence type="displayed"/>
    </isoform>
    <isoform>
        <id>Q92956-2</id>
        <name>2</name>
        <sequence type="described" ref="VSP_054186"/>
    </isoform>
</comment>
<comment type="tissue specificity">
    <text evidence="9 10">Widely expressed, with the highest expression in lung, spleen and thymus. Expressed in a subpopulation of B cells and monocytes (PubMed:18193050). Expressed in naive T cells (PubMed:19915044).</text>
</comment>
<comment type="domain">
    <text evidence="9">The cysteine rich domain I (CRD1/TNFR-Cys 1) is required for interaction with BY55 and BTLA.</text>
</comment>
<comment type="PTM">
    <text evidence="8">N-glycosylated.</text>
</comment>
<comment type="similarity">
    <text evidence="24">Belongs to the tumor necrosis factor receptor superfamily.</text>
</comment>
<proteinExistence type="evidence at protein level"/>
<accession>Q92956</accession>
<accession>B3KW30</accession>
<accession>B9DI89</accession>
<accession>Q6IB95</accession>
<accession>Q8N634</accession>
<accession>Q8WXR1</accession>
<accession>Q96J31</accession>
<accession>Q9UM65</accession>
<keyword id="KW-0002">3D-structure</keyword>
<keyword id="KW-1064">Adaptive immunity</keyword>
<keyword id="KW-0025">Alternative splicing</keyword>
<keyword id="KW-1003">Cell membrane</keyword>
<keyword id="KW-0903">Direct protein sequencing</keyword>
<keyword id="KW-1015">Disulfide bond</keyword>
<keyword id="KW-0325">Glycoprotein</keyword>
<keyword id="KW-1183">Host cell receptor for virus entry</keyword>
<keyword id="KW-0945">Host-virus interaction</keyword>
<keyword id="KW-0391">Immunity</keyword>
<keyword id="KW-0399">Innate immunity</keyword>
<keyword id="KW-0472">Membrane</keyword>
<keyword id="KW-0597">Phosphoprotein</keyword>
<keyword id="KW-1267">Proteomics identification</keyword>
<keyword id="KW-0675">Receptor</keyword>
<keyword id="KW-1185">Reference proteome</keyword>
<keyword id="KW-0677">Repeat</keyword>
<keyword id="KW-0732">Signal</keyword>
<keyword id="KW-0812">Transmembrane</keyword>
<keyword id="KW-1133">Transmembrane helix</keyword>
<name>TNR14_HUMAN</name>
<protein>
    <recommendedName>
        <fullName>Tumor necrosis factor receptor superfamily member 14</fullName>
    </recommendedName>
    <alternativeName>
        <fullName evidence="23">Herpes virus entry mediator A</fullName>
        <shortName evidence="23">Herpesvirus entry mediator A</shortName>
        <shortName evidence="18">HveA</shortName>
    </alternativeName>
    <alternativeName>
        <fullName>Tumor necrosis factor receptor-like 2</fullName>
        <shortName evidence="22">TR2</shortName>
    </alternativeName>
    <cdAntigenName>CD270</cdAntigenName>
</protein>
<reference key="1">
    <citation type="journal article" date="1996" name="Cell">
        <title>Herpes simplex virus-1 entry into cells mediated by a novel member of the TNF/NGF receptor family.</title>
        <authorList>
            <person name="Montgomery R.I."/>
            <person name="Warner M.S."/>
            <person name="Lum B.J."/>
            <person name="Spear P.G."/>
        </authorList>
    </citation>
    <scope>NUCLEOTIDE SEQUENCE [MRNA] (ISOFORM 1)</scope>
    <scope>FUNCTION AS A RECEPTOR FOR HHV-1</scope>
    <scope>FUNCTION (MICROBIAL INFECTION)</scope>
    <source>
        <tissue>Cervix adenocarcinoma</tissue>
    </source>
</reference>
<reference key="2">
    <citation type="journal article" date="1997" name="J. Biol. Chem.">
        <title>A newly identified member of the tumor necrosis factor receptor superfamily with a wide tissue distribution and involvement in lymphocyte activation.</title>
        <authorList>
            <person name="Kwon B.S."/>
            <person name="Tan K.B."/>
            <person name="Ni J."/>
            <person name="Oh K.-O."/>
            <person name="Lee Z.H."/>
            <person name="Kim K.K."/>
            <person name="Kim Y.-J."/>
            <person name="Wang S."/>
            <person name="Gentz R."/>
            <person name="Yu G.-L."/>
            <person name="Harrop J."/>
            <person name="Lyn S.D."/>
            <person name="Silverman C."/>
            <person name="Porter T.G."/>
            <person name="Truneh A."/>
            <person name="Young P.R."/>
        </authorList>
    </citation>
    <scope>NUCLEOTIDE SEQUENCE [MRNA] (ISOFORM 1)</scope>
</reference>
<reference key="3">
    <citation type="submission" date="1999-05" db="EMBL/GenBank/DDBJ databases">
        <authorList>
            <person name="Zhang W."/>
            <person name="Wan T."/>
            <person name="Cao X."/>
        </authorList>
    </citation>
    <scope>NUCLEOTIDE SEQUENCE [MRNA] (ISOFORM 1)</scope>
</reference>
<reference key="4">
    <citation type="journal article" date="2002" name="J. Infect. Dis.">
        <title>Search for polymorphisms in the genes for herpesvirus entry mediator, Nectin-1, and Nectin-2 in immune seronegative individuals.</title>
        <authorList>
            <person name="Struyf F."/>
            <person name="Posavad C.M."/>
            <person name="Keyaerts E."/>
            <person name="Van Ranst M."/>
            <person name="Corey L."/>
            <person name="Spear P.G."/>
        </authorList>
    </citation>
    <scope>NUCLEOTIDE SEQUENCE [MRNA] (ISOFORM 1)</scope>
    <scope>VARIANTS ARG-17 AND ILE-241</scope>
</reference>
<reference key="5">
    <citation type="journal article" date="2004" name="Nat. Genet.">
        <title>Complete sequencing and characterization of 21,243 full-length human cDNAs.</title>
        <authorList>
            <person name="Ota T."/>
            <person name="Suzuki Y."/>
            <person name="Nishikawa T."/>
            <person name="Otsuki T."/>
            <person name="Sugiyama T."/>
            <person name="Irie R."/>
            <person name="Wakamatsu A."/>
            <person name="Hayashi K."/>
            <person name="Sato H."/>
            <person name="Nagai K."/>
            <person name="Kimura K."/>
            <person name="Makita H."/>
            <person name="Sekine M."/>
            <person name="Obayashi M."/>
            <person name="Nishi T."/>
            <person name="Shibahara T."/>
            <person name="Tanaka T."/>
            <person name="Ishii S."/>
            <person name="Yamamoto J."/>
            <person name="Saito K."/>
            <person name="Kawai Y."/>
            <person name="Isono Y."/>
            <person name="Nakamura Y."/>
            <person name="Nagahari K."/>
            <person name="Murakami K."/>
            <person name="Yasuda T."/>
            <person name="Iwayanagi T."/>
            <person name="Wagatsuma M."/>
            <person name="Shiratori A."/>
            <person name="Sudo H."/>
            <person name="Hosoiri T."/>
            <person name="Kaku Y."/>
            <person name="Kodaira H."/>
            <person name="Kondo H."/>
            <person name="Sugawara M."/>
            <person name="Takahashi M."/>
            <person name="Kanda K."/>
            <person name="Yokoi T."/>
            <person name="Furuya T."/>
            <person name="Kikkawa E."/>
            <person name="Omura Y."/>
            <person name="Abe K."/>
            <person name="Kamihara K."/>
            <person name="Katsuta N."/>
            <person name="Sato K."/>
            <person name="Tanikawa M."/>
            <person name="Yamazaki M."/>
            <person name="Ninomiya K."/>
            <person name="Ishibashi T."/>
            <person name="Yamashita H."/>
            <person name="Murakawa K."/>
            <person name="Fujimori K."/>
            <person name="Tanai H."/>
            <person name="Kimata M."/>
            <person name="Watanabe M."/>
            <person name="Hiraoka S."/>
            <person name="Chiba Y."/>
            <person name="Ishida S."/>
            <person name="Ono Y."/>
            <person name="Takiguchi S."/>
            <person name="Watanabe S."/>
            <person name="Yosida M."/>
            <person name="Hotuta T."/>
            <person name="Kusano J."/>
            <person name="Kanehori K."/>
            <person name="Takahashi-Fujii A."/>
            <person name="Hara H."/>
            <person name="Tanase T.-O."/>
            <person name="Nomura Y."/>
            <person name="Togiya S."/>
            <person name="Komai F."/>
            <person name="Hara R."/>
            <person name="Takeuchi K."/>
            <person name="Arita M."/>
            <person name="Imose N."/>
            <person name="Musashino K."/>
            <person name="Yuuki H."/>
            <person name="Oshima A."/>
            <person name="Sasaki N."/>
            <person name="Aotsuka S."/>
            <person name="Yoshikawa Y."/>
            <person name="Matsunawa H."/>
            <person name="Ichihara T."/>
            <person name="Shiohata N."/>
            <person name="Sano S."/>
            <person name="Moriya S."/>
            <person name="Momiyama H."/>
            <person name="Satoh N."/>
            <person name="Takami S."/>
            <person name="Terashima Y."/>
            <person name="Suzuki O."/>
            <person name="Nakagawa S."/>
            <person name="Senoh A."/>
            <person name="Mizoguchi H."/>
            <person name="Goto Y."/>
            <person name="Shimizu F."/>
            <person name="Wakebe H."/>
            <person name="Hishigaki H."/>
            <person name="Watanabe T."/>
            <person name="Sugiyama A."/>
            <person name="Takemoto M."/>
            <person name="Kawakami B."/>
            <person name="Yamazaki M."/>
            <person name="Watanabe K."/>
            <person name="Kumagai A."/>
            <person name="Itakura S."/>
            <person name="Fukuzumi Y."/>
            <person name="Fujimori Y."/>
            <person name="Komiyama M."/>
            <person name="Tashiro H."/>
            <person name="Tanigami A."/>
            <person name="Fujiwara T."/>
            <person name="Ono T."/>
            <person name="Yamada K."/>
            <person name="Fujii Y."/>
            <person name="Ozaki K."/>
            <person name="Hirao M."/>
            <person name="Ohmori Y."/>
            <person name="Kawabata A."/>
            <person name="Hikiji T."/>
            <person name="Kobatake N."/>
            <person name="Inagaki H."/>
            <person name="Ikema Y."/>
            <person name="Okamoto S."/>
            <person name="Okitani R."/>
            <person name="Kawakami T."/>
            <person name="Noguchi S."/>
            <person name="Itoh T."/>
            <person name="Shigeta K."/>
            <person name="Senba T."/>
            <person name="Matsumura K."/>
            <person name="Nakajima Y."/>
            <person name="Mizuno T."/>
            <person name="Morinaga M."/>
            <person name="Sasaki M."/>
            <person name="Togashi T."/>
            <person name="Oyama M."/>
            <person name="Hata H."/>
            <person name="Watanabe M."/>
            <person name="Komatsu T."/>
            <person name="Mizushima-Sugano J."/>
            <person name="Satoh T."/>
            <person name="Shirai Y."/>
            <person name="Takahashi Y."/>
            <person name="Nakagawa K."/>
            <person name="Okumura K."/>
            <person name="Nagase T."/>
            <person name="Nomura N."/>
            <person name="Kikuchi H."/>
            <person name="Masuho Y."/>
            <person name="Yamashita R."/>
            <person name="Nakai K."/>
            <person name="Yada T."/>
            <person name="Nakamura Y."/>
            <person name="Ohara O."/>
            <person name="Isogai T."/>
            <person name="Sugano S."/>
        </authorList>
    </citation>
    <scope>NUCLEOTIDE SEQUENCE [LARGE SCALE MRNA] (ISOFORM 2)</scope>
    <source>
        <tissue>Spleen</tissue>
    </source>
</reference>
<reference key="6">
    <citation type="journal article" date="2003" name="Genome Res.">
        <title>The secreted protein discovery initiative (SPDI), a large-scale effort to identify novel human secreted and transmembrane proteins: a bioinformatics assessment.</title>
        <authorList>
            <person name="Clark H.F."/>
            <person name="Gurney A.L."/>
            <person name="Abaya E."/>
            <person name="Baker K."/>
            <person name="Baldwin D.T."/>
            <person name="Brush J."/>
            <person name="Chen J."/>
            <person name="Chow B."/>
            <person name="Chui C."/>
            <person name="Crowley C."/>
            <person name="Currell B."/>
            <person name="Deuel B."/>
            <person name="Dowd P."/>
            <person name="Eaton D."/>
            <person name="Foster J.S."/>
            <person name="Grimaldi C."/>
            <person name="Gu Q."/>
            <person name="Hass P.E."/>
            <person name="Heldens S."/>
            <person name="Huang A."/>
            <person name="Kim H.S."/>
            <person name="Klimowski L."/>
            <person name="Jin Y."/>
            <person name="Johnson S."/>
            <person name="Lee J."/>
            <person name="Lewis L."/>
            <person name="Liao D."/>
            <person name="Mark M.R."/>
            <person name="Robbie E."/>
            <person name="Sanchez C."/>
            <person name="Schoenfeld J."/>
            <person name="Seshagiri S."/>
            <person name="Simmons L."/>
            <person name="Singh J."/>
            <person name="Smith V."/>
            <person name="Stinson J."/>
            <person name="Vagts A."/>
            <person name="Vandlen R.L."/>
            <person name="Watanabe C."/>
            <person name="Wieand D."/>
            <person name="Woods K."/>
            <person name="Xie M.-H."/>
            <person name="Yansura D.G."/>
            <person name="Yi S."/>
            <person name="Yu G."/>
            <person name="Yuan J."/>
            <person name="Zhang M."/>
            <person name="Zhang Z."/>
            <person name="Goddard A.D."/>
            <person name="Wood W.I."/>
            <person name="Godowski P.J."/>
            <person name="Gray A.M."/>
        </authorList>
    </citation>
    <scope>NUCLEOTIDE SEQUENCE [LARGE SCALE MRNA] (ISOFORM 1)</scope>
    <scope>VARIANT ARG-17</scope>
</reference>
<reference key="7">
    <citation type="submission" date="2004-06" db="EMBL/GenBank/DDBJ databases">
        <title>Cloning of human full open reading frames in Gateway(TM) system entry vector (pDONR201).</title>
        <authorList>
            <person name="Ebert L."/>
            <person name="Schick M."/>
            <person name="Neubert P."/>
            <person name="Schatten R."/>
            <person name="Henze S."/>
            <person name="Korn B."/>
        </authorList>
    </citation>
    <scope>NUCLEOTIDE SEQUENCE [LARGE SCALE MRNA] (ISOFORM 1)</scope>
</reference>
<reference key="8">
    <citation type="submission" date="2003-11" db="EMBL/GenBank/DDBJ databases">
        <authorList>
            <consortium name="NIEHS SNPs program"/>
        </authorList>
    </citation>
    <scope>NUCLEOTIDE SEQUENCE [GENOMIC DNA]</scope>
    <scope>VARIANTS ARG-17; THR-117; GLU-174 AND ILE-241</scope>
</reference>
<reference key="9">
    <citation type="journal article" date="2006" name="Nature">
        <title>The DNA sequence and biological annotation of human chromosome 1.</title>
        <authorList>
            <person name="Gregory S.G."/>
            <person name="Barlow K.F."/>
            <person name="McLay K.E."/>
            <person name="Kaul R."/>
            <person name="Swarbreck D."/>
            <person name="Dunham A."/>
            <person name="Scott C.E."/>
            <person name="Howe K.L."/>
            <person name="Woodfine K."/>
            <person name="Spencer C.C.A."/>
            <person name="Jones M.C."/>
            <person name="Gillson C."/>
            <person name="Searle S."/>
            <person name="Zhou Y."/>
            <person name="Kokocinski F."/>
            <person name="McDonald L."/>
            <person name="Evans R."/>
            <person name="Phillips K."/>
            <person name="Atkinson A."/>
            <person name="Cooper R."/>
            <person name="Jones C."/>
            <person name="Hall R.E."/>
            <person name="Andrews T.D."/>
            <person name="Lloyd C."/>
            <person name="Ainscough R."/>
            <person name="Almeida J.P."/>
            <person name="Ambrose K.D."/>
            <person name="Anderson F."/>
            <person name="Andrew R.W."/>
            <person name="Ashwell R.I.S."/>
            <person name="Aubin K."/>
            <person name="Babbage A.K."/>
            <person name="Bagguley C.L."/>
            <person name="Bailey J."/>
            <person name="Beasley H."/>
            <person name="Bethel G."/>
            <person name="Bird C.P."/>
            <person name="Bray-Allen S."/>
            <person name="Brown J.Y."/>
            <person name="Brown A.J."/>
            <person name="Buckley D."/>
            <person name="Burton J."/>
            <person name="Bye J."/>
            <person name="Carder C."/>
            <person name="Chapman J.C."/>
            <person name="Clark S.Y."/>
            <person name="Clarke G."/>
            <person name="Clee C."/>
            <person name="Cobley V."/>
            <person name="Collier R.E."/>
            <person name="Corby N."/>
            <person name="Coville G.J."/>
            <person name="Davies J."/>
            <person name="Deadman R."/>
            <person name="Dunn M."/>
            <person name="Earthrowl M."/>
            <person name="Ellington A.G."/>
            <person name="Errington H."/>
            <person name="Frankish A."/>
            <person name="Frankland J."/>
            <person name="French L."/>
            <person name="Garner P."/>
            <person name="Garnett J."/>
            <person name="Gay L."/>
            <person name="Ghori M.R.J."/>
            <person name="Gibson R."/>
            <person name="Gilby L.M."/>
            <person name="Gillett W."/>
            <person name="Glithero R.J."/>
            <person name="Grafham D.V."/>
            <person name="Griffiths C."/>
            <person name="Griffiths-Jones S."/>
            <person name="Grocock R."/>
            <person name="Hammond S."/>
            <person name="Harrison E.S.I."/>
            <person name="Hart E."/>
            <person name="Haugen E."/>
            <person name="Heath P.D."/>
            <person name="Holmes S."/>
            <person name="Holt K."/>
            <person name="Howden P.J."/>
            <person name="Hunt A.R."/>
            <person name="Hunt S.E."/>
            <person name="Hunter G."/>
            <person name="Isherwood J."/>
            <person name="James R."/>
            <person name="Johnson C."/>
            <person name="Johnson D."/>
            <person name="Joy A."/>
            <person name="Kay M."/>
            <person name="Kershaw J.K."/>
            <person name="Kibukawa M."/>
            <person name="Kimberley A.M."/>
            <person name="King A."/>
            <person name="Knights A.J."/>
            <person name="Lad H."/>
            <person name="Laird G."/>
            <person name="Lawlor S."/>
            <person name="Leongamornlert D.A."/>
            <person name="Lloyd D.M."/>
            <person name="Loveland J."/>
            <person name="Lovell J."/>
            <person name="Lush M.J."/>
            <person name="Lyne R."/>
            <person name="Martin S."/>
            <person name="Mashreghi-Mohammadi M."/>
            <person name="Matthews L."/>
            <person name="Matthews N.S.W."/>
            <person name="McLaren S."/>
            <person name="Milne S."/>
            <person name="Mistry S."/>
            <person name="Moore M.J.F."/>
            <person name="Nickerson T."/>
            <person name="O'Dell C.N."/>
            <person name="Oliver K."/>
            <person name="Palmeiri A."/>
            <person name="Palmer S.A."/>
            <person name="Parker A."/>
            <person name="Patel D."/>
            <person name="Pearce A.V."/>
            <person name="Peck A.I."/>
            <person name="Pelan S."/>
            <person name="Phelps K."/>
            <person name="Phillimore B.J."/>
            <person name="Plumb R."/>
            <person name="Rajan J."/>
            <person name="Raymond C."/>
            <person name="Rouse G."/>
            <person name="Saenphimmachak C."/>
            <person name="Sehra H.K."/>
            <person name="Sheridan E."/>
            <person name="Shownkeen R."/>
            <person name="Sims S."/>
            <person name="Skuce C.D."/>
            <person name="Smith M."/>
            <person name="Steward C."/>
            <person name="Subramanian S."/>
            <person name="Sycamore N."/>
            <person name="Tracey A."/>
            <person name="Tromans A."/>
            <person name="Van Helmond Z."/>
            <person name="Wall M."/>
            <person name="Wallis J.M."/>
            <person name="White S."/>
            <person name="Whitehead S.L."/>
            <person name="Wilkinson J.E."/>
            <person name="Willey D.L."/>
            <person name="Williams H."/>
            <person name="Wilming L."/>
            <person name="Wray P.W."/>
            <person name="Wu Z."/>
            <person name="Coulson A."/>
            <person name="Vaudin M."/>
            <person name="Sulston J.E."/>
            <person name="Durbin R.M."/>
            <person name="Hubbard T."/>
            <person name="Wooster R."/>
            <person name="Dunham I."/>
            <person name="Carter N.P."/>
            <person name="McVean G."/>
            <person name="Ross M.T."/>
            <person name="Harrow J."/>
            <person name="Olson M.V."/>
            <person name="Beck S."/>
            <person name="Rogers J."/>
            <person name="Bentley D.R."/>
        </authorList>
    </citation>
    <scope>NUCLEOTIDE SEQUENCE [LARGE SCALE GENOMIC DNA]</scope>
</reference>
<reference key="10">
    <citation type="submission" date="2005-07" db="EMBL/GenBank/DDBJ databases">
        <authorList>
            <person name="Mural R.J."/>
            <person name="Istrail S."/>
            <person name="Sutton G.G."/>
            <person name="Florea L."/>
            <person name="Halpern A.L."/>
            <person name="Mobarry C.M."/>
            <person name="Lippert R."/>
            <person name="Walenz B."/>
            <person name="Shatkay H."/>
            <person name="Dew I."/>
            <person name="Miller J.R."/>
            <person name="Flanigan M.J."/>
            <person name="Edwards N.J."/>
            <person name="Bolanos R."/>
            <person name="Fasulo D."/>
            <person name="Halldorsson B.V."/>
            <person name="Hannenhalli S."/>
            <person name="Turner R."/>
            <person name="Yooseph S."/>
            <person name="Lu F."/>
            <person name="Nusskern D.R."/>
            <person name="Shue B.C."/>
            <person name="Zheng X.H."/>
            <person name="Zhong F."/>
            <person name="Delcher A.L."/>
            <person name="Huson D.H."/>
            <person name="Kravitz S.A."/>
            <person name="Mouchard L."/>
            <person name="Reinert K."/>
            <person name="Remington K.A."/>
            <person name="Clark A.G."/>
            <person name="Waterman M.S."/>
            <person name="Eichler E.E."/>
            <person name="Adams M.D."/>
            <person name="Hunkapiller M.W."/>
            <person name="Myers E.W."/>
            <person name="Venter J.C."/>
        </authorList>
    </citation>
    <scope>NUCLEOTIDE SEQUENCE [LARGE SCALE GENOMIC DNA]</scope>
</reference>
<reference key="11">
    <citation type="journal article" date="2004" name="Genome Res.">
        <title>The status, quality, and expansion of the NIH full-length cDNA project: the Mammalian Gene Collection (MGC).</title>
        <authorList>
            <consortium name="The MGC Project Team"/>
        </authorList>
    </citation>
    <scope>NUCLEOTIDE SEQUENCE [LARGE SCALE MRNA] (ISOFORMS 1 AND 2)</scope>
    <source>
        <tissue>Skin</tissue>
    </source>
</reference>
<reference key="12">
    <citation type="journal article" date="2004" name="Protein Sci.">
        <title>Signal peptide prediction based on analysis of experimentally verified cleavage sites.</title>
        <authorList>
            <person name="Zhang Z."/>
            <person name="Henzel W.J."/>
        </authorList>
    </citation>
    <scope>PROTEIN SEQUENCE OF 39-53</scope>
</reference>
<reference key="13">
    <citation type="journal article" date="1997" name="J. Biol. Chem.">
        <title>ATAR, a novel tumor necrosis factor receptor family member, signals through TRAF2 and TRAF5.</title>
        <authorList>
            <person name="Hsu H."/>
            <person name="Solovyev I."/>
            <person name="Colombero A."/>
            <person name="Elliott R."/>
            <person name="Kelley M."/>
            <person name="Boyle W.J."/>
        </authorList>
    </citation>
    <scope>INTERACTION WITH TRAF2 AND TRAF5</scope>
</reference>
<reference key="14">
    <citation type="journal article" date="1997" name="J. Biol. Chem.">
        <title>Herpesvirus entry mediator, a member of the tumor necrosis factor receptor (TNFR) family, interacts with members of the TNFR-associated factor family and activates the transcription factors NF-kappaB and AP-1.</title>
        <authorList>
            <person name="Marsters S.A."/>
            <person name="Ayres T.M."/>
            <person name="Skubatch M."/>
            <person name="Gray C.L."/>
            <person name="Rothe M."/>
            <person name="Ashkenazi A."/>
        </authorList>
    </citation>
    <scope>INTERACTION WITH TRAF3 AND TRAF5</scope>
</reference>
<reference key="15">
    <citation type="journal article" date="1998" name="Immunity">
        <title>LIGHT, a new member of the TNF superfamily, and lymphotoxin alpha are ligands for herpesvirus entry mediator.</title>
        <authorList>
            <person name="Mauri D.N."/>
            <person name="Ebner R."/>
            <person name="Montgomery R.I."/>
            <person name="Kochel K.D."/>
            <person name="Cheung T.C."/>
            <person name="Yu G.-L."/>
            <person name="Ruben S."/>
            <person name="Murphy M."/>
            <person name="Eisenberg R.J."/>
            <person name="Cohen G.H."/>
            <person name="Spear P.G."/>
            <person name="Ware C.F."/>
        </authorList>
    </citation>
    <scope>FUNCTION</scope>
    <scope>SUBUNIT</scope>
    <scope>INTERACTION WITH LTA</scope>
    <scope>INTERACTION WITH TNFSF14</scope>
</reference>
<reference key="16">
    <citation type="journal article" date="1998" name="J. Virol.">
        <title>Herpes simplex virus glycoprotein D can bind to poliovirus receptor-related protein 1 or herpesvirus entry mediator, two structurally unrelated mediators of virus entry.</title>
        <authorList>
            <person name="Krummenacher C."/>
            <person name="Nicola A.V."/>
            <person name="Whitbeck J.C."/>
            <person name="Lou H."/>
            <person name="Hou W."/>
            <person name="Lambris J.D."/>
            <person name="Geraghty R.J."/>
            <person name="Spear P.G."/>
            <person name="Cohen G.H."/>
            <person name="Eisenberg R.J."/>
        </authorList>
    </citation>
    <scope>FUNCTION (MICROBIAL INFECTION)</scope>
    <scope>INTERACTION WITH HUMAN HERPESVIRUS 1/HHV-1 AND HUMAN HERPESVIRUS 2/HHV-2 GLYCOPROTEIN D</scope>
</reference>
<reference key="17">
    <citation type="journal article" date="2000" name="J. Immunol.">
        <title>LIGHT, a TNF-like molecule, costimulates T cell proliferation and is required for dendritic cell-mediated allogeneic T cell response.</title>
        <authorList>
            <person name="Tamada K."/>
            <person name="Shimozaki K."/>
            <person name="Chapoval A.I."/>
            <person name="Zhai Y."/>
            <person name="Su J."/>
            <person name="Chen S.F."/>
            <person name="Hsieh S.L."/>
            <person name="Nagata S."/>
            <person name="Ni J."/>
            <person name="Chen L."/>
        </authorList>
    </citation>
    <scope>FUNCTION</scope>
</reference>
<reference key="18">
    <citation type="journal article" date="2008" name="Nat. Immunol.">
        <title>CD160 inhibits activation of human CD4+ T cells through interaction with herpesvirus entry mediator.</title>
        <authorList>
            <person name="Cai G."/>
            <person name="Anumanthan A."/>
            <person name="Brown J.A."/>
            <person name="Greenfield E.A."/>
            <person name="Zhu B."/>
            <person name="Freeman G.J."/>
        </authorList>
    </citation>
    <scope>FUNCTION</scope>
    <scope>TISSUE SPECIFICITY</scope>
    <scope>SUBUNIT</scope>
    <scope>INTERACTION WITH CD160</scope>
    <scope>DOMAIN</scope>
</reference>
<reference key="19">
    <citation type="journal article" date="2009" name="J. Immunol.">
        <title>T cell intrinsic heterodimeric complexes between HVEM and BTLA determine receptivity to the surrounding microenvironment.</title>
        <authorList>
            <person name="Cheung T.C."/>
            <person name="Oborne L.M."/>
            <person name="Steinberg M.W."/>
            <person name="Macauley M.G."/>
            <person name="Fukuyama S."/>
            <person name="Sanjo H."/>
            <person name="D'Souza C."/>
            <person name="Norris P.S."/>
            <person name="Pfeffer K."/>
            <person name="Murphy K.M."/>
            <person name="Kronenberg M."/>
            <person name="Spear P.G."/>
            <person name="Ware C.F."/>
        </authorList>
    </citation>
    <scope>FUNCTION</scope>
    <scope>TISSUE SPECIFICITY</scope>
    <scope>SUBUNIT</scope>
    <scope>INTERACTION WITH BTLA</scope>
    <scope>SUBCELLULAR LOCATION</scope>
    <scope>MUTAGENESIS OF TYR-61</scope>
</reference>
<reference key="20">
    <citation type="journal article" date="2013" name="J. Immunol.">
        <title>CD160 activation by herpesvirus entry mediator augments inflammatory cytokine production and cytolytic function by NK cells.</title>
        <authorList>
            <person name="Sedy J.R."/>
            <person name="Bjordahl R.L."/>
            <person name="Bekiaris V."/>
            <person name="Macauley M.G."/>
            <person name="Ware B.C."/>
            <person name="Norris P.S."/>
            <person name="Lurain N.S."/>
            <person name="Benedict C.A."/>
            <person name="Ware C.F."/>
        </authorList>
    </citation>
    <scope>FUNCTION</scope>
    <scope>SUBUNIT</scope>
    <scope>INTERACTION WITH CD160</scope>
</reference>
<reference key="21">
    <citation type="journal article" date="2014" name="J. Proteomics">
        <title>An enzyme assisted RP-RPLC approach for in-depth analysis of human liver phosphoproteome.</title>
        <authorList>
            <person name="Bian Y."/>
            <person name="Song C."/>
            <person name="Cheng K."/>
            <person name="Dong M."/>
            <person name="Wang F."/>
            <person name="Huang J."/>
            <person name="Sun D."/>
            <person name="Wang L."/>
            <person name="Ye M."/>
            <person name="Zou H."/>
        </authorList>
    </citation>
    <scope>PHOSPHORYLATION [LARGE SCALE ANALYSIS] AT SER-240</scope>
    <scope>IDENTIFICATION BY MASS SPECTROMETRY [LARGE SCALE ANALYSIS]</scope>
    <source>
        <tissue>Liver</tissue>
    </source>
</reference>
<reference key="22">
    <citation type="journal article" date="2001" name="Mol. Cell">
        <title>Herpes simplex virus glycoprotein D bound to the human receptor HveA.</title>
        <authorList>
            <person name="Carfi A."/>
            <person name="Willis S.H."/>
            <person name="Whitbeck J.C."/>
            <person name="Krummenacher C."/>
            <person name="Cohen G.H."/>
            <person name="Eisenberg R.J."/>
            <person name="Wiley D.C."/>
        </authorList>
    </citation>
    <scope>X-RAY CRYSTALLOGRAPHY (2.65 ANGSTROMS) OF 39-200 IN COMPLEX WITH HUMAN HERPESVIRUS 1 GLYCOPROTEIN</scope>
    <scope>FUNCTION (MICROBIAL INFECTION)</scope>
</reference>
<reference key="23">
    <citation type="journal article" date="2005" name="J. Biol. Chem.">
        <title>Attenuating lymphocyte activity: the crystal structure of the BTLA-HVEM complex.</title>
        <authorList>
            <person name="Compaan D.M."/>
            <person name="Gonzalez L.C."/>
            <person name="Tom I."/>
            <person name="Loyet K.M."/>
            <person name="Eaton D."/>
            <person name="Hymowitz S.G."/>
        </authorList>
    </citation>
    <scope>X-RAY CRYSTALLOGRAPHY (2.8 ANGSTROMS) OF 26-137 IN COMPLEX WITH BTLA</scope>
    <scope>GLYCOSYLATION AT ASN-110</scope>
    <scope>DISULFIDE BOND</scope>
</reference>
<evidence type="ECO:0000250" key="1">
    <source>
        <dbReference type="UniProtKB" id="Q80WM9"/>
    </source>
</evidence>
<evidence type="ECO:0000255" key="2"/>
<evidence type="ECO:0000269" key="3">
    <source>
    </source>
</evidence>
<evidence type="ECO:0000269" key="4">
    <source>
    </source>
</evidence>
<evidence type="ECO:0000269" key="5">
    <source>
    </source>
</evidence>
<evidence type="ECO:0000269" key="6">
    <source>
    </source>
</evidence>
<evidence type="ECO:0000269" key="7">
    <source>
    </source>
</evidence>
<evidence type="ECO:0000269" key="8">
    <source>
    </source>
</evidence>
<evidence type="ECO:0000269" key="9">
    <source>
    </source>
</evidence>
<evidence type="ECO:0000269" key="10">
    <source>
    </source>
</evidence>
<evidence type="ECO:0000269" key="11">
    <source>
    </source>
</evidence>
<evidence type="ECO:0000269" key="12">
    <source>
    </source>
</evidence>
<evidence type="ECO:0000269" key="13">
    <source>
    </source>
</evidence>
<evidence type="ECO:0000269" key="14">
    <source>
    </source>
</evidence>
<evidence type="ECO:0000269" key="15">
    <source>
    </source>
</evidence>
<evidence type="ECO:0000269" key="16">
    <source>
    </source>
</evidence>
<evidence type="ECO:0000269" key="17">
    <source ref="8"/>
</evidence>
<evidence type="ECO:0000303" key="18">
    <source>
    </source>
</evidence>
<evidence type="ECO:0000303" key="19">
    <source>
    </source>
</evidence>
<evidence type="ECO:0000303" key="20">
    <source>
    </source>
</evidence>
<evidence type="ECO:0000303" key="21">
    <source>
    </source>
</evidence>
<evidence type="ECO:0000303" key="22">
    <source>
    </source>
</evidence>
<evidence type="ECO:0000303" key="23">
    <source>
    </source>
</evidence>
<evidence type="ECO:0000305" key="24"/>
<evidence type="ECO:0000312" key="25">
    <source>
        <dbReference type="HGNC" id="HGNC:11912"/>
    </source>
</evidence>
<evidence type="ECO:0007744" key="26">
    <source>
    </source>
</evidence>
<evidence type="ECO:0007829" key="27">
    <source>
        <dbReference type="PDB" id="4FHQ"/>
    </source>
</evidence>
<evidence type="ECO:0007829" key="28">
    <source>
        <dbReference type="PDB" id="4RSU"/>
    </source>
</evidence>
<evidence type="ECO:0007829" key="29">
    <source>
        <dbReference type="PDB" id="5T2Q"/>
    </source>
</evidence>